<feature type="chain" id="PRO_1000184262" description="Urease accessory protein UreG">
    <location>
        <begin position="1"/>
        <end position="203"/>
    </location>
</feature>
<feature type="binding site" evidence="1">
    <location>
        <begin position="14"/>
        <end position="21"/>
    </location>
    <ligand>
        <name>GTP</name>
        <dbReference type="ChEBI" id="CHEBI:37565"/>
    </ligand>
</feature>
<sequence>MKSANGPLRVGIGGPVGSGKTALTEKLCKAMRDRYSVAVVTNDIYTREDADALIRMQALSSDRVVGVETGGCPHTAIREDASINLQAIAGLNERIPDLDVIFIESGGDNLAATFSPDLADVTIYVISVCQGEEIPRKGGPGITRSDLLVINKKDLAPYVEVDLDVMDRDAARMRDARPHVFSDLKRGEGVADIVRFLESHGGL</sequence>
<accession>B9JR74</accession>
<evidence type="ECO:0000255" key="1">
    <source>
        <dbReference type="HAMAP-Rule" id="MF_01389"/>
    </source>
</evidence>
<reference key="1">
    <citation type="journal article" date="2009" name="J. Bacteriol.">
        <title>Genome sequences of three Agrobacterium biovars help elucidate the evolution of multichromosome genomes in bacteria.</title>
        <authorList>
            <person name="Slater S.C."/>
            <person name="Goldman B.S."/>
            <person name="Goodner B."/>
            <person name="Setubal J.C."/>
            <person name="Farrand S.K."/>
            <person name="Nester E.W."/>
            <person name="Burr T.J."/>
            <person name="Banta L."/>
            <person name="Dickerman A.W."/>
            <person name="Paulsen I."/>
            <person name="Otten L."/>
            <person name="Suen G."/>
            <person name="Welch R."/>
            <person name="Almeida N.F."/>
            <person name="Arnold F."/>
            <person name="Burton O.T."/>
            <person name="Du Z."/>
            <person name="Ewing A."/>
            <person name="Godsy E."/>
            <person name="Heisel S."/>
            <person name="Houmiel K.L."/>
            <person name="Jhaveri J."/>
            <person name="Lu J."/>
            <person name="Miller N.M."/>
            <person name="Norton S."/>
            <person name="Chen Q."/>
            <person name="Phoolcharoen W."/>
            <person name="Ohlin V."/>
            <person name="Ondrusek D."/>
            <person name="Pride N."/>
            <person name="Stricklin S.L."/>
            <person name="Sun J."/>
            <person name="Wheeler C."/>
            <person name="Wilson L."/>
            <person name="Zhu H."/>
            <person name="Wood D.W."/>
        </authorList>
    </citation>
    <scope>NUCLEOTIDE SEQUENCE [LARGE SCALE GENOMIC DNA]</scope>
    <source>
        <strain>ATCC BAA-846 / DSM 112012 / S4</strain>
    </source>
</reference>
<keyword id="KW-0143">Chaperone</keyword>
<keyword id="KW-0963">Cytoplasm</keyword>
<keyword id="KW-0342">GTP-binding</keyword>
<keyword id="KW-0996">Nickel insertion</keyword>
<keyword id="KW-0547">Nucleotide-binding</keyword>
<keyword id="KW-1185">Reference proteome</keyword>
<proteinExistence type="inferred from homology"/>
<organism>
    <name type="scientific">Allorhizobium ampelinum (strain ATCC BAA-846 / DSM 112012 / S4)</name>
    <name type="common">Agrobacterium vitis (strain S4)</name>
    <dbReference type="NCBI Taxonomy" id="311402"/>
    <lineage>
        <taxon>Bacteria</taxon>
        <taxon>Pseudomonadati</taxon>
        <taxon>Pseudomonadota</taxon>
        <taxon>Alphaproteobacteria</taxon>
        <taxon>Hyphomicrobiales</taxon>
        <taxon>Rhizobiaceae</taxon>
        <taxon>Rhizobium/Agrobacterium group</taxon>
        <taxon>Allorhizobium</taxon>
        <taxon>Allorhizobium ampelinum</taxon>
    </lineage>
</organism>
<dbReference type="EMBL" id="CP000633">
    <property type="protein sequence ID" value="ACM37485.1"/>
    <property type="molecule type" value="Genomic_DNA"/>
</dbReference>
<dbReference type="RefSeq" id="WP_015916898.1">
    <property type="nucleotide sequence ID" value="NC_011989.1"/>
</dbReference>
<dbReference type="SMR" id="B9JR74"/>
<dbReference type="STRING" id="311402.Avi_3468"/>
<dbReference type="KEGG" id="avi:Avi_3468"/>
<dbReference type="eggNOG" id="COG0378">
    <property type="taxonomic scope" value="Bacteria"/>
</dbReference>
<dbReference type="HOGENOM" id="CLU_072144_1_0_5"/>
<dbReference type="Proteomes" id="UP000001596">
    <property type="component" value="Chromosome 1"/>
</dbReference>
<dbReference type="GO" id="GO:0005737">
    <property type="term" value="C:cytoplasm"/>
    <property type="evidence" value="ECO:0007669"/>
    <property type="project" value="UniProtKB-SubCell"/>
</dbReference>
<dbReference type="GO" id="GO:0005525">
    <property type="term" value="F:GTP binding"/>
    <property type="evidence" value="ECO:0007669"/>
    <property type="project" value="UniProtKB-KW"/>
</dbReference>
<dbReference type="GO" id="GO:0003924">
    <property type="term" value="F:GTPase activity"/>
    <property type="evidence" value="ECO:0007669"/>
    <property type="project" value="InterPro"/>
</dbReference>
<dbReference type="GO" id="GO:0016151">
    <property type="term" value="F:nickel cation binding"/>
    <property type="evidence" value="ECO:0007669"/>
    <property type="project" value="UniProtKB-UniRule"/>
</dbReference>
<dbReference type="GO" id="GO:0043419">
    <property type="term" value="P:urea catabolic process"/>
    <property type="evidence" value="ECO:0007669"/>
    <property type="project" value="InterPro"/>
</dbReference>
<dbReference type="CDD" id="cd05540">
    <property type="entry name" value="UreG"/>
    <property type="match status" value="1"/>
</dbReference>
<dbReference type="FunFam" id="3.40.50.300:FF:000208">
    <property type="entry name" value="Urease accessory protein UreG"/>
    <property type="match status" value="1"/>
</dbReference>
<dbReference type="Gene3D" id="3.40.50.300">
    <property type="entry name" value="P-loop containing nucleotide triphosphate hydrolases"/>
    <property type="match status" value="1"/>
</dbReference>
<dbReference type="HAMAP" id="MF_01389">
    <property type="entry name" value="UreG"/>
    <property type="match status" value="1"/>
</dbReference>
<dbReference type="InterPro" id="IPR003495">
    <property type="entry name" value="CobW/HypB/UreG_nucleotide-bd"/>
</dbReference>
<dbReference type="InterPro" id="IPR027417">
    <property type="entry name" value="P-loop_NTPase"/>
</dbReference>
<dbReference type="InterPro" id="IPR004400">
    <property type="entry name" value="UreG"/>
</dbReference>
<dbReference type="NCBIfam" id="TIGR00101">
    <property type="entry name" value="ureG"/>
    <property type="match status" value="1"/>
</dbReference>
<dbReference type="PANTHER" id="PTHR31715">
    <property type="entry name" value="UREASE ACCESSORY PROTEIN G"/>
    <property type="match status" value="1"/>
</dbReference>
<dbReference type="PANTHER" id="PTHR31715:SF0">
    <property type="entry name" value="UREASE ACCESSORY PROTEIN G"/>
    <property type="match status" value="1"/>
</dbReference>
<dbReference type="Pfam" id="PF02492">
    <property type="entry name" value="cobW"/>
    <property type="match status" value="1"/>
</dbReference>
<dbReference type="PIRSF" id="PIRSF005624">
    <property type="entry name" value="Ni-bind_GTPase"/>
    <property type="match status" value="1"/>
</dbReference>
<dbReference type="SUPFAM" id="SSF52540">
    <property type="entry name" value="P-loop containing nucleoside triphosphate hydrolases"/>
    <property type="match status" value="1"/>
</dbReference>
<name>UREG_ALLAM</name>
<protein>
    <recommendedName>
        <fullName evidence="1">Urease accessory protein UreG</fullName>
    </recommendedName>
</protein>
<gene>
    <name evidence="1" type="primary">ureG</name>
    <name type="ordered locus">Avi_3468</name>
</gene>
<comment type="function">
    <text evidence="1">Facilitates the functional incorporation of the urease nickel metallocenter. This process requires GTP hydrolysis, probably effectuated by UreG.</text>
</comment>
<comment type="subunit">
    <text evidence="1">Homodimer. UreD, UreF and UreG form a complex that acts as a GTP-hydrolysis-dependent molecular chaperone, activating the urease apoprotein by helping to assemble the nickel containing metallocenter of UreC. The UreE protein probably delivers the nickel.</text>
</comment>
<comment type="subcellular location">
    <subcellularLocation>
        <location evidence="1">Cytoplasm</location>
    </subcellularLocation>
</comment>
<comment type="similarity">
    <text evidence="1">Belongs to the SIMIBI class G3E GTPase family. UreG subfamily.</text>
</comment>